<sequence>MNKTAIALLALLASSASLAATPWQKITQPVPGSAQSIGSFSNGCIVGADTLPIQSEHYQVMRTDQRRYFGHPDLVMFIQRLSSQVSNLGMGTVLIGDMGMPAGGRFNGGHASHQTGLDVDIFLQLPKTRWTSAQLLRPQALDLVSRDGKHVVSTLWKPEIFSLIKLAAQDKDVTRIFVNPAIKQQLCLDAGTDRDWLRKVRPWFQHRAHMHVRLRCPADSLECEDQPLPPSGDGCGAELQSWFEPPKPGTTKPEKKTPPPLPPSCQALLDEHVI</sequence>
<accession>P0C0T5</accession>
<accession>P14007</accession>
<keyword id="KW-0002">3D-structure</keyword>
<keyword id="KW-0903">Direct protein sequencing</keyword>
<keyword id="KW-1015">Disulfide bond</keyword>
<keyword id="KW-0378">Hydrolase</keyword>
<keyword id="KW-0479">Metal-binding</keyword>
<keyword id="KW-0482">Metalloprotease</keyword>
<keyword id="KW-0574">Periplasm</keyword>
<keyword id="KW-0645">Protease</keyword>
<keyword id="KW-1185">Reference proteome</keyword>
<keyword id="KW-0732">Signal</keyword>
<keyword id="KW-0862">Zinc</keyword>
<dbReference type="EC" id="3.4.24.-" evidence="2"/>
<dbReference type="EMBL" id="X16909">
    <property type="protein sequence ID" value="CAA34782.1"/>
    <property type="molecule type" value="mRNA"/>
</dbReference>
<dbReference type="EMBL" id="U00096">
    <property type="protein sequence ID" value="AAC75388.1"/>
    <property type="molecule type" value="Genomic_DNA"/>
</dbReference>
<dbReference type="EMBL" id="AP009048">
    <property type="protein sequence ID" value="BAA16184.1"/>
    <property type="molecule type" value="Genomic_DNA"/>
</dbReference>
<dbReference type="PIR" id="S08345">
    <property type="entry name" value="S08345"/>
</dbReference>
<dbReference type="RefSeq" id="NP_416831.1">
    <property type="nucleotide sequence ID" value="NC_000913.3"/>
</dbReference>
<dbReference type="RefSeq" id="WP_001043825.1">
    <property type="nucleotide sequence ID" value="NZ_LN832404.1"/>
</dbReference>
<dbReference type="PDB" id="1TZP">
    <property type="method" value="X-ray"/>
    <property type="resolution" value="1.40 A"/>
    <property type="chains" value="A/B=20-274"/>
</dbReference>
<dbReference type="PDB" id="1U10">
    <property type="method" value="X-ray"/>
    <property type="resolution" value="2.40 A"/>
    <property type="chains" value="A/B/C/D/E/F=20-274"/>
</dbReference>
<dbReference type="PDBsum" id="1TZP"/>
<dbReference type="PDBsum" id="1U10"/>
<dbReference type="SMR" id="P0C0T5"/>
<dbReference type="BioGRID" id="4259647">
    <property type="interactions" value="322"/>
</dbReference>
<dbReference type="FunCoup" id="P0C0T5">
    <property type="interactions" value="17"/>
</dbReference>
<dbReference type="IntAct" id="P0C0T5">
    <property type="interactions" value="2"/>
</dbReference>
<dbReference type="STRING" id="511145.b2328"/>
<dbReference type="DrugBank" id="DB01955">
    <property type="generic name" value="1,4-Butanediol"/>
</dbReference>
<dbReference type="MEROPS" id="M74.001"/>
<dbReference type="jPOST" id="P0C0T5"/>
<dbReference type="PaxDb" id="511145-b2328"/>
<dbReference type="EnsemblBacteria" id="AAC75388">
    <property type="protein sequence ID" value="AAC75388"/>
    <property type="gene ID" value="b2328"/>
</dbReference>
<dbReference type="GeneID" id="946812"/>
<dbReference type="KEGG" id="ecj:JW2325"/>
<dbReference type="KEGG" id="eco:b2328"/>
<dbReference type="KEGG" id="ecoc:C3026_12970"/>
<dbReference type="PATRIC" id="fig|1411691.4.peg.4404"/>
<dbReference type="EchoBASE" id="EB0575"/>
<dbReference type="eggNOG" id="COG3770">
    <property type="taxonomic scope" value="Bacteria"/>
</dbReference>
<dbReference type="HOGENOM" id="CLU_052496_0_0_6"/>
<dbReference type="InParanoid" id="P0C0T5"/>
<dbReference type="OMA" id="VRPWWGH"/>
<dbReference type="OrthoDB" id="1467367at2"/>
<dbReference type="PhylomeDB" id="P0C0T5"/>
<dbReference type="BioCyc" id="EcoCyc:EG10580-MONOMER"/>
<dbReference type="BioCyc" id="MetaCyc:EG10580-MONOMER"/>
<dbReference type="EvolutionaryTrace" id="P0C0T5"/>
<dbReference type="PRO" id="PR:P0C0T5"/>
<dbReference type="Proteomes" id="UP000000625">
    <property type="component" value="Chromosome"/>
</dbReference>
<dbReference type="GO" id="GO:0030288">
    <property type="term" value="C:outer membrane-bounded periplasmic space"/>
    <property type="evidence" value="ECO:0007669"/>
    <property type="project" value="InterPro"/>
</dbReference>
<dbReference type="GO" id="GO:0004175">
    <property type="term" value="F:endopeptidase activity"/>
    <property type="evidence" value="ECO:0000315"/>
    <property type="project" value="EcoCyc"/>
</dbReference>
<dbReference type="GO" id="GO:0046872">
    <property type="term" value="F:metal ion binding"/>
    <property type="evidence" value="ECO:0007669"/>
    <property type="project" value="UniProtKB-KW"/>
</dbReference>
<dbReference type="GO" id="GO:0004222">
    <property type="term" value="F:metalloendopeptidase activity"/>
    <property type="evidence" value="ECO:0007669"/>
    <property type="project" value="UniProtKB-UniRule"/>
</dbReference>
<dbReference type="GO" id="GO:0008233">
    <property type="term" value="F:peptidase activity"/>
    <property type="evidence" value="ECO:0000314"/>
    <property type="project" value="EcoCyc"/>
</dbReference>
<dbReference type="GO" id="GO:0004252">
    <property type="term" value="F:serine-type endopeptidase activity"/>
    <property type="evidence" value="ECO:0007669"/>
    <property type="project" value="InterPro"/>
</dbReference>
<dbReference type="GO" id="GO:0009252">
    <property type="term" value="P:peptidoglycan biosynthetic process"/>
    <property type="evidence" value="ECO:0000314"/>
    <property type="project" value="EcoCyc"/>
</dbReference>
<dbReference type="GO" id="GO:0000270">
    <property type="term" value="P:peptidoglycan metabolic process"/>
    <property type="evidence" value="ECO:0000314"/>
    <property type="project" value="EcoCyc"/>
</dbReference>
<dbReference type="GO" id="GO:0006508">
    <property type="term" value="P:proteolysis"/>
    <property type="evidence" value="ECO:0007669"/>
    <property type="project" value="UniProtKB-KW"/>
</dbReference>
<dbReference type="GO" id="GO:0009410">
    <property type="term" value="P:response to xenobiotic stimulus"/>
    <property type="evidence" value="ECO:0000270"/>
    <property type="project" value="EcoCyc"/>
</dbReference>
<dbReference type="FunFam" id="3.30.1380.10:FF:000002">
    <property type="entry name" value="Penicillin-insensitive murein endopeptidase"/>
    <property type="match status" value="1"/>
</dbReference>
<dbReference type="Gene3D" id="3.30.1380.10">
    <property type="match status" value="1"/>
</dbReference>
<dbReference type="HAMAP" id="MF_01623">
    <property type="entry name" value="MepA"/>
    <property type="match status" value="1"/>
</dbReference>
<dbReference type="InterPro" id="IPR009045">
    <property type="entry name" value="Hedgehog_sig/DD-Pept_Zn-bd_sf"/>
</dbReference>
<dbReference type="InterPro" id="IPR005073">
    <property type="entry name" value="Peptidase_M74"/>
</dbReference>
<dbReference type="NCBIfam" id="NF006947">
    <property type="entry name" value="PRK09429.1"/>
    <property type="match status" value="1"/>
</dbReference>
<dbReference type="Pfam" id="PF03411">
    <property type="entry name" value="Peptidase_M74"/>
    <property type="match status" value="1"/>
</dbReference>
<dbReference type="PIRSF" id="PIRSF018455">
    <property type="entry name" value="MepA"/>
    <property type="match status" value="1"/>
</dbReference>
<dbReference type="SUPFAM" id="SSF55166">
    <property type="entry name" value="Hedgehog/DD-peptidase"/>
    <property type="match status" value="1"/>
</dbReference>
<proteinExistence type="evidence at protein level"/>
<protein>
    <recommendedName>
        <fullName>Penicillin-insensitive murein endopeptidase</fullName>
        <ecNumber evidence="2">3.4.24.-</ecNumber>
    </recommendedName>
    <alternativeName>
        <fullName>D-alanyl-D-alanine-endopeptidase</fullName>
        <shortName>DD-endopeptidase</shortName>
    </alternativeName>
</protein>
<name>MEPA_ECOLI</name>
<comment type="function">
    <text evidence="2">Murein endopeptidase that cleaves the D-alanyl-meso-2,6-diamino-pimelyl amide bond that connects peptidoglycan strands. Likely plays a role in the removal of murein from the sacculus and could also play a role in the integration of nascent murein strands into the sacculus.</text>
</comment>
<comment type="cofactor">
    <cofactor evidence="2">
        <name>Zn(2+)</name>
        <dbReference type="ChEBI" id="CHEBI:29105"/>
    </cofactor>
    <text evidence="2">Binds 2 Zn(2+) ions per subunit. Zn(2+) ion 1 is bound in the active site. Zn(2+) ion 2 is bound at the dimer interface by residues from both subunits.</text>
</comment>
<comment type="activity regulation">
    <text evidence="2">Inhibited by Zn(2+) at 10 mM and by metal chelating agents EDTA and 1,10-phenanthroline.</text>
</comment>
<comment type="biophysicochemical properties">
    <phDependence>
        <text evidence="2">Optimum pH is 5-8.</text>
    </phDependence>
</comment>
<comment type="subunit">
    <text evidence="2">Dimer.</text>
</comment>
<comment type="subcellular location">
    <subcellularLocation>
        <location evidence="5">Periplasm</location>
    </subcellularLocation>
</comment>
<comment type="mass spectrometry"/>
<comment type="miscellaneous">
    <text evidence="2">In E.coli there are three murein endopeptidases: two are penicillin sensitive (DacB and PbpG), the other (MepA) not.</text>
</comment>
<comment type="similarity">
    <text evidence="4">Belongs to the peptidase M74 family.</text>
</comment>
<organism>
    <name type="scientific">Escherichia coli (strain K12)</name>
    <dbReference type="NCBI Taxonomy" id="83333"/>
    <lineage>
        <taxon>Bacteria</taxon>
        <taxon>Pseudomonadati</taxon>
        <taxon>Pseudomonadota</taxon>
        <taxon>Gammaproteobacteria</taxon>
        <taxon>Enterobacterales</taxon>
        <taxon>Enterobacteriaceae</taxon>
        <taxon>Escherichia</taxon>
    </lineage>
</organism>
<reference key="1">
    <citation type="journal article" date="1990" name="Mol. Microbiol.">
        <title>Cloning and characterization of mepA, the structural gene of the penicillin-insensitive murein endopeptidase from Escherichia coli.</title>
        <authorList>
            <person name="Keck W."/>
            <person name="van Leeuwen A.M."/>
            <person name="Huber M."/>
            <person name="Goodell E.W."/>
        </authorList>
    </citation>
    <scope>NUCLEOTIDE SEQUENCE [GENOMIC DNA]</scope>
    <scope>PROTEIN SEQUENCE OF 20-30</scope>
    <source>
        <strain>K12</strain>
    </source>
</reference>
<reference key="2">
    <citation type="journal article" date="1997" name="DNA Res.">
        <title>Construction of a contiguous 874-kb sequence of the Escherichia coli-K12 genome corresponding to 50.0-68.8 min on the linkage map and analysis of its sequence features.</title>
        <authorList>
            <person name="Yamamoto Y."/>
            <person name="Aiba H."/>
            <person name="Baba T."/>
            <person name="Hayashi K."/>
            <person name="Inada T."/>
            <person name="Isono K."/>
            <person name="Itoh T."/>
            <person name="Kimura S."/>
            <person name="Kitagawa M."/>
            <person name="Makino K."/>
            <person name="Miki T."/>
            <person name="Mitsuhashi N."/>
            <person name="Mizobuchi K."/>
            <person name="Mori H."/>
            <person name="Nakade S."/>
            <person name="Nakamura Y."/>
            <person name="Nashimoto H."/>
            <person name="Oshima T."/>
            <person name="Oyama S."/>
            <person name="Saito N."/>
            <person name="Sampei G."/>
            <person name="Satoh Y."/>
            <person name="Sivasundaram S."/>
            <person name="Tagami H."/>
            <person name="Takahashi H."/>
            <person name="Takeda J."/>
            <person name="Takemoto K."/>
            <person name="Uehara K."/>
            <person name="Wada C."/>
            <person name="Yamagata S."/>
            <person name="Horiuchi T."/>
        </authorList>
    </citation>
    <scope>NUCLEOTIDE SEQUENCE [LARGE SCALE GENOMIC DNA]</scope>
    <source>
        <strain>K12 / W3110 / ATCC 27325 / DSM 5911</strain>
    </source>
</reference>
<reference key="3">
    <citation type="journal article" date="1997" name="Science">
        <title>The complete genome sequence of Escherichia coli K-12.</title>
        <authorList>
            <person name="Blattner F.R."/>
            <person name="Plunkett G. III"/>
            <person name="Bloch C.A."/>
            <person name="Perna N.T."/>
            <person name="Burland V."/>
            <person name="Riley M."/>
            <person name="Collado-Vides J."/>
            <person name="Glasner J.D."/>
            <person name="Rode C.K."/>
            <person name="Mayhew G.F."/>
            <person name="Gregor J."/>
            <person name="Davis N.W."/>
            <person name="Kirkpatrick H.A."/>
            <person name="Goeden M.A."/>
            <person name="Rose D.J."/>
            <person name="Mau B."/>
            <person name="Shao Y."/>
        </authorList>
    </citation>
    <scope>NUCLEOTIDE SEQUENCE [LARGE SCALE GENOMIC DNA]</scope>
    <source>
        <strain>K12 / MG1655 / ATCC 47076</strain>
    </source>
</reference>
<reference key="4">
    <citation type="journal article" date="2006" name="Mol. Syst. Biol.">
        <title>Highly accurate genome sequences of Escherichia coli K-12 strains MG1655 and W3110.</title>
        <authorList>
            <person name="Hayashi K."/>
            <person name="Morooka N."/>
            <person name="Yamamoto Y."/>
            <person name="Fujita K."/>
            <person name="Isono K."/>
            <person name="Choi S."/>
            <person name="Ohtsubo E."/>
            <person name="Baba T."/>
            <person name="Wanner B.L."/>
            <person name="Mori H."/>
            <person name="Horiuchi T."/>
        </authorList>
    </citation>
    <scope>NUCLEOTIDE SEQUENCE [LARGE SCALE GENOMIC DNA]</scope>
    <source>
        <strain>K12 / W3110 / ATCC 27325 / DSM 5911</strain>
    </source>
</reference>
<reference key="5">
    <citation type="journal article" date="2004" name="J. Biol. Chem.">
        <title>Peptidoglycan amidase MepA is a LAS metallopeptidase.</title>
        <authorList>
            <person name="Marcyjaniak M."/>
            <person name="Odintsov S.G."/>
            <person name="Sabala I."/>
            <person name="Bochtler M."/>
        </authorList>
    </citation>
    <scope>X-RAY CRYSTALLOGRAPHY (1.4 ANGSTROMS) OF 20-274 AND IN COMPLEX WITH ZINC ION</scope>
    <scope>FUNCTION</scope>
    <scope>CATALYTIC ACTIVITY</scope>
    <scope>BIOPHYSICOCHEMICAL PROPERTIES</scope>
    <scope>MASS SPECTROMETRY</scope>
    <scope>SUBCELLULAR LOCATION</scope>
    <scope>MUTAGENESIS OF HIS-113; ASP-120; HIS-209 AND HIS-211</scope>
    <scope>ACTIVITY REGULATION</scope>
    <scope>COFACTOR</scope>
</reference>
<gene>
    <name type="primary">mepA</name>
    <name type="ordered locus">b2328</name>
    <name type="ordered locus">JW2325</name>
</gene>
<feature type="signal peptide" evidence="3">
    <location>
        <begin position="1"/>
        <end position="19"/>
    </location>
</feature>
<feature type="chain" id="PRO_0000028520" description="Penicillin-insensitive murein endopeptidase">
    <location>
        <begin position="20"/>
        <end position="274"/>
    </location>
</feature>
<feature type="region of interest" description="Disordered" evidence="1">
    <location>
        <begin position="228"/>
        <end position="274"/>
    </location>
</feature>
<feature type="binding site" evidence="2">
    <location>
        <position position="110"/>
    </location>
    <ligand>
        <name>Zn(2+)</name>
        <dbReference type="ChEBI" id="CHEBI:29105"/>
        <label>1</label>
    </ligand>
</feature>
<feature type="binding site" evidence="2">
    <location>
        <position position="113"/>
    </location>
    <ligand>
        <name>Zn(2+)</name>
        <dbReference type="ChEBI" id="CHEBI:29105"/>
        <label>1</label>
    </ligand>
</feature>
<feature type="binding site" evidence="2">
    <location>
        <position position="120"/>
    </location>
    <ligand>
        <name>Zn(2+)</name>
        <dbReference type="ChEBI" id="CHEBI:29105"/>
        <label>1</label>
    </ligand>
</feature>
<feature type="binding site" evidence="2">
    <location>
        <position position="147"/>
    </location>
    <ligand>
        <name>Zn(2+)</name>
        <dbReference type="ChEBI" id="CHEBI:29105"/>
        <label>2</label>
    </ligand>
</feature>
<feature type="binding site" evidence="2">
    <location>
        <position position="150"/>
    </location>
    <ligand>
        <name>Zn(2+)</name>
        <dbReference type="ChEBI" id="CHEBI:29105"/>
        <label>2</label>
    </ligand>
</feature>
<feature type="binding site" evidence="2">
    <location>
        <position position="211"/>
    </location>
    <ligand>
        <name>Zn(2+)</name>
        <dbReference type="ChEBI" id="CHEBI:29105"/>
        <label>1</label>
    </ligand>
</feature>
<feature type="disulfide bond" evidence="2">
    <location>
        <begin position="44"/>
        <end position="265"/>
    </location>
</feature>
<feature type="disulfide bond" evidence="2">
    <location>
        <begin position="187"/>
        <end position="235"/>
    </location>
</feature>
<feature type="disulfide bond" evidence="2">
    <location>
        <begin position="216"/>
        <end position="223"/>
    </location>
</feature>
<feature type="mutagenesis site" description="Strongly reduces enzyme activity." evidence="2">
    <original>H</original>
    <variation>A</variation>
    <location>
        <position position="113"/>
    </location>
</feature>
<feature type="mutagenesis site" description="Strongly reduces enzyme activity." evidence="2">
    <original>D</original>
    <variation>A</variation>
    <location>
        <position position="120"/>
    </location>
</feature>
<feature type="mutagenesis site" description="Strongly reduces enzyme activity." evidence="2">
    <original>H</original>
    <variation>A</variation>
    <location>
        <position position="209"/>
    </location>
</feature>
<feature type="mutagenesis site" description="Strongly reduces enzyme activity." evidence="2">
    <original>H</original>
    <variation>A</variation>
    <location>
        <position position="211"/>
    </location>
</feature>
<feature type="helix" evidence="6">
    <location>
        <begin position="22"/>
        <end position="25"/>
    </location>
</feature>
<feature type="strand" evidence="6">
    <location>
        <begin position="35"/>
        <end position="39"/>
    </location>
</feature>
<feature type="strand" evidence="6">
    <location>
        <begin position="42"/>
        <end position="47"/>
    </location>
</feature>
<feature type="strand" evidence="6">
    <location>
        <begin position="56"/>
        <end position="61"/>
    </location>
</feature>
<feature type="helix" evidence="6">
    <location>
        <begin position="63"/>
        <end position="65"/>
    </location>
</feature>
<feature type="strand" evidence="7">
    <location>
        <begin position="68"/>
        <end position="70"/>
    </location>
</feature>
<feature type="helix" evidence="6">
    <location>
        <begin position="72"/>
        <end position="87"/>
    </location>
</feature>
<feature type="strand" evidence="6">
    <location>
        <begin position="93"/>
        <end position="95"/>
    </location>
</feature>
<feature type="strand" evidence="6">
    <location>
        <begin position="107"/>
        <end position="109"/>
    </location>
</feature>
<feature type="strand" evidence="6">
    <location>
        <begin position="118"/>
        <end position="123"/>
    </location>
</feature>
<feature type="helix" evidence="6">
    <location>
        <begin position="132"/>
        <end position="136"/>
    </location>
</feature>
<feature type="strand" evidence="6">
    <location>
        <begin position="148"/>
        <end position="151"/>
    </location>
</feature>
<feature type="turn" evidence="6">
    <location>
        <begin position="153"/>
        <end position="155"/>
    </location>
</feature>
<feature type="helix" evidence="6">
    <location>
        <begin position="158"/>
        <end position="169"/>
    </location>
</feature>
<feature type="strand" evidence="6">
    <location>
        <begin position="173"/>
        <end position="178"/>
    </location>
</feature>
<feature type="helix" evidence="6">
    <location>
        <begin position="180"/>
        <end position="189"/>
    </location>
</feature>
<feature type="helix" evidence="6">
    <location>
        <begin position="195"/>
        <end position="199"/>
    </location>
</feature>
<feature type="strand" evidence="6">
    <location>
        <begin position="200"/>
        <end position="202"/>
    </location>
</feature>
<feature type="strand" evidence="6">
    <location>
        <begin position="207"/>
        <end position="214"/>
    </location>
</feature>
<feature type="helix" evidence="6">
    <location>
        <begin position="237"/>
        <end position="241"/>
    </location>
</feature>
<feature type="helix" evidence="6">
    <location>
        <begin position="263"/>
        <end position="270"/>
    </location>
</feature>
<evidence type="ECO:0000256" key="1">
    <source>
        <dbReference type="SAM" id="MobiDB-lite"/>
    </source>
</evidence>
<evidence type="ECO:0000269" key="2">
    <source>
    </source>
</evidence>
<evidence type="ECO:0000269" key="3">
    <source>
    </source>
</evidence>
<evidence type="ECO:0000305" key="4"/>
<evidence type="ECO:0000305" key="5">
    <source>
    </source>
</evidence>
<evidence type="ECO:0007829" key="6">
    <source>
        <dbReference type="PDB" id="1TZP"/>
    </source>
</evidence>
<evidence type="ECO:0007829" key="7">
    <source>
        <dbReference type="PDB" id="1U10"/>
    </source>
</evidence>